<evidence type="ECO:0000255" key="1">
    <source>
        <dbReference type="HAMAP-Rule" id="MF_00159"/>
    </source>
</evidence>
<keyword id="KW-0004">4Fe-4S</keyword>
<keyword id="KW-0408">Iron</keyword>
<keyword id="KW-0411">Iron-sulfur</keyword>
<keyword id="KW-0414">Isoprene biosynthesis</keyword>
<keyword id="KW-0479">Metal-binding</keyword>
<keyword id="KW-0560">Oxidoreductase</keyword>
<comment type="function">
    <text evidence="1">Converts 2C-methyl-D-erythritol 2,4-cyclodiphosphate (ME-2,4cPP) into 1-hydroxy-2-methyl-2-(E)-butenyl 4-diphosphate.</text>
</comment>
<comment type="catalytic activity">
    <reaction evidence="1">
        <text>(2E)-4-hydroxy-3-methylbut-2-enyl diphosphate + oxidized [flavodoxin] + H2O + 2 H(+) = 2-C-methyl-D-erythritol 2,4-cyclic diphosphate + reduced [flavodoxin]</text>
        <dbReference type="Rhea" id="RHEA:43604"/>
        <dbReference type="Rhea" id="RHEA-COMP:10622"/>
        <dbReference type="Rhea" id="RHEA-COMP:10623"/>
        <dbReference type="ChEBI" id="CHEBI:15377"/>
        <dbReference type="ChEBI" id="CHEBI:15378"/>
        <dbReference type="ChEBI" id="CHEBI:57618"/>
        <dbReference type="ChEBI" id="CHEBI:58210"/>
        <dbReference type="ChEBI" id="CHEBI:58483"/>
        <dbReference type="ChEBI" id="CHEBI:128753"/>
        <dbReference type="EC" id="1.17.7.3"/>
    </reaction>
</comment>
<comment type="cofactor">
    <cofactor evidence="1">
        <name>[4Fe-4S] cluster</name>
        <dbReference type="ChEBI" id="CHEBI:49883"/>
    </cofactor>
    <text evidence="1">Binds 1 [4Fe-4S] cluster.</text>
</comment>
<comment type="pathway">
    <text evidence="1">Isoprenoid biosynthesis; isopentenyl diphosphate biosynthesis via DXP pathway; isopentenyl diphosphate from 1-deoxy-D-xylulose 5-phosphate: step 5/6.</text>
</comment>
<comment type="similarity">
    <text evidence="1">Belongs to the IspG family.</text>
</comment>
<reference key="1">
    <citation type="journal article" date="2009" name="J. Bacteriol.">
        <title>Genomic sequencing reveals regulatory mutations and recombinational events in the widely used MC4100 lineage of Escherichia coli K-12.</title>
        <authorList>
            <person name="Ferenci T."/>
            <person name="Zhou Z."/>
            <person name="Betteridge T."/>
            <person name="Ren Y."/>
            <person name="Liu Y."/>
            <person name="Feng L."/>
            <person name="Reeves P.R."/>
            <person name="Wang L."/>
        </authorList>
    </citation>
    <scope>NUCLEOTIDE SEQUENCE [LARGE SCALE GENOMIC DNA]</scope>
    <source>
        <strain>K12 / MC4100 / BW2952</strain>
    </source>
</reference>
<feature type="chain" id="PRO_1000203502" description="4-hydroxy-3-methylbut-2-en-1-yl diphosphate synthase (flavodoxin)">
    <location>
        <begin position="1"/>
        <end position="372"/>
    </location>
</feature>
<feature type="binding site" evidence="1">
    <location>
        <position position="270"/>
    </location>
    <ligand>
        <name>[4Fe-4S] cluster</name>
        <dbReference type="ChEBI" id="CHEBI:49883"/>
    </ligand>
</feature>
<feature type="binding site" evidence="1">
    <location>
        <position position="273"/>
    </location>
    <ligand>
        <name>[4Fe-4S] cluster</name>
        <dbReference type="ChEBI" id="CHEBI:49883"/>
    </ligand>
</feature>
<feature type="binding site" evidence="1">
    <location>
        <position position="305"/>
    </location>
    <ligand>
        <name>[4Fe-4S] cluster</name>
        <dbReference type="ChEBI" id="CHEBI:49883"/>
    </ligand>
</feature>
<feature type="binding site" evidence="1">
    <location>
        <position position="312"/>
    </location>
    <ligand>
        <name>[4Fe-4S] cluster</name>
        <dbReference type="ChEBI" id="CHEBI:49883"/>
    </ligand>
</feature>
<gene>
    <name evidence="1" type="primary">ispG</name>
    <name type="ordered locus">BWG_2279</name>
</gene>
<protein>
    <recommendedName>
        <fullName evidence="1">4-hydroxy-3-methylbut-2-en-1-yl diphosphate synthase (flavodoxin)</fullName>
        <ecNumber evidence="1">1.17.7.3</ecNumber>
    </recommendedName>
    <alternativeName>
        <fullName evidence="1">1-hydroxy-2-methyl-2-(E)-butenyl 4-diphosphate synthase</fullName>
    </alternativeName>
</protein>
<accession>C4ZX90</accession>
<sequence length="372" mass="40684">MHNQAPIQRRKSTRIYVGNVPIGDGAPIAVQSMTNTRTTDVEATVNQIKALERVGADIVRVSVPTMDAAEAFKLIKQQVNVPLVADIHFDYRIALKVAEYGVDCLRINPGNIGNEERIRMVVDCARDKNIPIRIGVNAGSLEKDLQEKYGEPTPQALLESAMRHVDHLDRLNFDQFKVSVKASDVFLAVESYRLLAKQIDQPLHLGITEAGGARSGAVKSAIGLGLLLSEGIGDTLRVSLAADPVEEIKVGFDILKSLRIRSRGINFIACPTCSRQEFDVIGTVNALEQRLEDIITPMDVSIIGCVVNGPGEALVSTLGVTGGNKKSGLYEDGVRKDRLDNNDMIDQLEARIRAKASQLDEARRIDVQQVEK</sequence>
<name>ISPG_ECOBW</name>
<dbReference type="EC" id="1.17.7.3" evidence="1"/>
<dbReference type="EMBL" id="CP001396">
    <property type="protein sequence ID" value="ACR61739.1"/>
    <property type="molecule type" value="Genomic_DNA"/>
</dbReference>
<dbReference type="RefSeq" id="WP_000551807.1">
    <property type="nucleotide sequence ID" value="NC_012759.1"/>
</dbReference>
<dbReference type="SMR" id="C4ZX90"/>
<dbReference type="GeneID" id="86947404"/>
<dbReference type="KEGG" id="ebw:BWG_2279"/>
<dbReference type="HOGENOM" id="CLU_042258_0_0_6"/>
<dbReference type="UniPathway" id="UPA00056">
    <property type="reaction ID" value="UER00096"/>
</dbReference>
<dbReference type="GO" id="GO:0051539">
    <property type="term" value="F:4 iron, 4 sulfur cluster binding"/>
    <property type="evidence" value="ECO:0007669"/>
    <property type="project" value="UniProtKB-UniRule"/>
</dbReference>
<dbReference type="GO" id="GO:0046429">
    <property type="term" value="F:4-hydroxy-3-methylbut-2-en-1-yl diphosphate synthase activity (ferredoxin)"/>
    <property type="evidence" value="ECO:0007669"/>
    <property type="project" value="UniProtKB-UniRule"/>
</dbReference>
<dbReference type="GO" id="GO:0141197">
    <property type="term" value="F:4-hydroxy-3-methylbut-2-enyl-diphosphate synthase activity (flavodoxin)"/>
    <property type="evidence" value="ECO:0007669"/>
    <property type="project" value="UniProtKB-EC"/>
</dbReference>
<dbReference type="GO" id="GO:0005506">
    <property type="term" value="F:iron ion binding"/>
    <property type="evidence" value="ECO:0007669"/>
    <property type="project" value="InterPro"/>
</dbReference>
<dbReference type="GO" id="GO:0019288">
    <property type="term" value="P:isopentenyl diphosphate biosynthetic process, methylerythritol 4-phosphate pathway"/>
    <property type="evidence" value="ECO:0007669"/>
    <property type="project" value="UniProtKB-UniRule"/>
</dbReference>
<dbReference type="GO" id="GO:0016114">
    <property type="term" value="P:terpenoid biosynthetic process"/>
    <property type="evidence" value="ECO:0007669"/>
    <property type="project" value="InterPro"/>
</dbReference>
<dbReference type="FunFam" id="3.20.20.20:FF:000001">
    <property type="entry name" value="4-hydroxy-3-methylbut-2-en-1-yl diphosphate synthase (flavodoxin)"/>
    <property type="match status" value="1"/>
</dbReference>
<dbReference type="FunFam" id="3.30.413.10:FF:000002">
    <property type="entry name" value="4-hydroxy-3-methylbut-2-en-1-yl diphosphate synthase (flavodoxin)"/>
    <property type="match status" value="1"/>
</dbReference>
<dbReference type="Gene3D" id="3.20.20.20">
    <property type="entry name" value="Dihydropteroate synthase-like"/>
    <property type="match status" value="1"/>
</dbReference>
<dbReference type="Gene3D" id="3.30.413.10">
    <property type="entry name" value="Sulfite Reductase Hemoprotein, domain 1"/>
    <property type="match status" value="1"/>
</dbReference>
<dbReference type="HAMAP" id="MF_00159">
    <property type="entry name" value="IspG"/>
    <property type="match status" value="1"/>
</dbReference>
<dbReference type="InterPro" id="IPR011005">
    <property type="entry name" value="Dihydropteroate_synth-like_sf"/>
</dbReference>
<dbReference type="InterPro" id="IPR016425">
    <property type="entry name" value="IspG_bac"/>
</dbReference>
<dbReference type="InterPro" id="IPR004588">
    <property type="entry name" value="IspG_bac-typ"/>
</dbReference>
<dbReference type="InterPro" id="IPR045854">
    <property type="entry name" value="NO2/SO3_Rdtase_4Fe4S_sf"/>
</dbReference>
<dbReference type="NCBIfam" id="TIGR00612">
    <property type="entry name" value="ispG_gcpE"/>
    <property type="match status" value="1"/>
</dbReference>
<dbReference type="NCBIfam" id="NF001540">
    <property type="entry name" value="PRK00366.1"/>
    <property type="match status" value="1"/>
</dbReference>
<dbReference type="PANTHER" id="PTHR30454">
    <property type="entry name" value="4-HYDROXY-3-METHYLBUT-2-EN-1-YL DIPHOSPHATE SYNTHASE"/>
    <property type="match status" value="1"/>
</dbReference>
<dbReference type="PANTHER" id="PTHR30454:SF0">
    <property type="entry name" value="4-HYDROXY-3-METHYLBUT-2-EN-1-YL DIPHOSPHATE SYNTHASE (FERREDOXIN), CHLOROPLASTIC"/>
    <property type="match status" value="1"/>
</dbReference>
<dbReference type="Pfam" id="PF04551">
    <property type="entry name" value="GcpE"/>
    <property type="match status" value="1"/>
</dbReference>
<dbReference type="PIRSF" id="PIRSF004640">
    <property type="entry name" value="IspG"/>
    <property type="match status" value="1"/>
</dbReference>
<dbReference type="SUPFAM" id="SSF51717">
    <property type="entry name" value="Dihydropteroate synthetase-like"/>
    <property type="match status" value="1"/>
</dbReference>
<dbReference type="SUPFAM" id="SSF56014">
    <property type="entry name" value="Nitrite and sulphite reductase 4Fe-4S domain-like"/>
    <property type="match status" value="1"/>
</dbReference>
<organism>
    <name type="scientific">Escherichia coli (strain K12 / MC4100 / BW2952)</name>
    <dbReference type="NCBI Taxonomy" id="595496"/>
    <lineage>
        <taxon>Bacteria</taxon>
        <taxon>Pseudomonadati</taxon>
        <taxon>Pseudomonadota</taxon>
        <taxon>Gammaproteobacteria</taxon>
        <taxon>Enterobacterales</taxon>
        <taxon>Enterobacteriaceae</taxon>
        <taxon>Escherichia</taxon>
    </lineage>
</organism>
<proteinExistence type="inferred from homology"/>